<accession>C6DKT7</accession>
<organism>
    <name type="scientific">Pectobacterium carotovorum subsp. carotovorum (strain PC1)</name>
    <dbReference type="NCBI Taxonomy" id="561230"/>
    <lineage>
        <taxon>Bacteria</taxon>
        <taxon>Pseudomonadati</taxon>
        <taxon>Pseudomonadota</taxon>
        <taxon>Gammaproteobacteria</taxon>
        <taxon>Enterobacterales</taxon>
        <taxon>Pectobacteriaceae</taxon>
        <taxon>Pectobacterium</taxon>
    </lineage>
</organism>
<dbReference type="EMBL" id="CP001657">
    <property type="protein sequence ID" value="ACT13538.1"/>
    <property type="molecule type" value="Genomic_DNA"/>
</dbReference>
<dbReference type="RefSeq" id="WP_011093369.1">
    <property type="nucleotide sequence ID" value="NC_012917.1"/>
</dbReference>
<dbReference type="SMR" id="C6DKT7"/>
<dbReference type="STRING" id="561230.PC1_2507"/>
<dbReference type="GeneID" id="90763872"/>
<dbReference type="KEGG" id="pct:PC1_2507"/>
<dbReference type="eggNOG" id="COG0333">
    <property type="taxonomic scope" value="Bacteria"/>
</dbReference>
<dbReference type="HOGENOM" id="CLU_129084_2_1_6"/>
<dbReference type="OrthoDB" id="9801927at2"/>
<dbReference type="Proteomes" id="UP000002736">
    <property type="component" value="Chromosome"/>
</dbReference>
<dbReference type="GO" id="GO:0015934">
    <property type="term" value="C:large ribosomal subunit"/>
    <property type="evidence" value="ECO:0007669"/>
    <property type="project" value="InterPro"/>
</dbReference>
<dbReference type="GO" id="GO:0003735">
    <property type="term" value="F:structural constituent of ribosome"/>
    <property type="evidence" value="ECO:0007669"/>
    <property type="project" value="InterPro"/>
</dbReference>
<dbReference type="GO" id="GO:0006412">
    <property type="term" value="P:translation"/>
    <property type="evidence" value="ECO:0007669"/>
    <property type="project" value="UniProtKB-UniRule"/>
</dbReference>
<dbReference type="HAMAP" id="MF_00340">
    <property type="entry name" value="Ribosomal_bL32"/>
    <property type="match status" value="1"/>
</dbReference>
<dbReference type="InterPro" id="IPR002677">
    <property type="entry name" value="Ribosomal_bL32"/>
</dbReference>
<dbReference type="InterPro" id="IPR044957">
    <property type="entry name" value="Ribosomal_bL32_bact"/>
</dbReference>
<dbReference type="InterPro" id="IPR011332">
    <property type="entry name" value="Ribosomal_zn-bd"/>
</dbReference>
<dbReference type="NCBIfam" id="TIGR01031">
    <property type="entry name" value="rpmF_bact"/>
    <property type="match status" value="1"/>
</dbReference>
<dbReference type="PANTHER" id="PTHR35534">
    <property type="entry name" value="50S RIBOSOMAL PROTEIN L32"/>
    <property type="match status" value="1"/>
</dbReference>
<dbReference type="PANTHER" id="PTHR35534:SF1">
    <property type="entry name" value="LARGE RIBOSOMAL SUBUNIT PROTEIN BL32"/>
    <property type="match status" value="1"/>
</dbReference>
<dbReference type="Pfam" id="PF01783">
    <property type="entry name" value="Ribosomal_L32p"/>
    <property type="match status" value="1"/>
</dbReference>
<dbReference type="SUPFAM" id="SSF57829">
    <property type="entry name" value="Zn-binding ribosomal proteins"/>
    <property type="match status" value="1"/>
</dbReference>
<feature type="chain" id="PRO_1000205268" description="Large ribosomal subunit protein bL32">
    <location>
        <begin position="1"/>
        <end position="56"/>
    </location>
</feature>
<feature type="region of interest" description="Disordered" evidence="2">
    <location>
        <begin position="1"/>
        <end position="29"/>
    </location>
</feature>
<comment type="similarity">
    <text evidence="1">Belongs to the bacterial ribosomal protein bL32 family.</text>
</comment>
<keyword id="KW-0687">Ribonucleoprotein</keyword>
<keyword id="KW-0689">Ribosomal protein</keyword>
<proteinExistence type="inferred from homology"/>
<gene>
    <name evidence="1" type="primary">rpmF</name>
    <name type="ordered locus">PC1_2507</name>
</gene>
<name>RL32_PECCP</name>
<reference key="1">
    <citation type="submission" date="2009-07" db="EMBL/GenBank/DDBJ databases">
        <title>Complete sequence of Pectobacterium carotovorum subsp. carotovorum PC1.</title>
        <authorList>
            <consortium name="US DOE Joint Genome Institute"/>
            <person name="Lucas S."/>
            <person name="Copeland A."/>
            <person name="Lapidus A."/>
            <person name="Glavina del Rio T."/>
            <person name="Tice H."/>
            <person name="Bruce D."/>
            <person name="Goodwin L."/>
            <person name="Pitluck S."/>
            <person name="Munk A.C."/>
            <person name="Brettin T."/>
            <person name="Detter J.C."/>
            <person name="Han C."/>
            <person name="Tapia R."/>
            <person name="Larimer F."/>
            <person name="Land M."/>
            <person name="Hauser L."/>
            <person name="Kyrpides N."/>
            <person name="Mikhailova N."/>
            <person name="Balakrishnan V."/>
            <person name="Glasner J."/>
            <person name="Perna N.T."/>
        </authorList>
    </citation>
    <scope>NUCLEOTIDE SEQUENCE [LARGE SCALE GENOMIC DNA]</scope>
    <source>
        <strain>PC1</strain>
    </source>
</reference>
<protein>
    <recommendedName>
        <fullName evidence="1">Large ribosomal subunit protein bL32</fullName>
    </recommendedName>
    <alternativeName>
        <fullName evidence="3">50S ribosomal protein L32</fullName>
    </alternativeName>
</protein>
<sequence>MAVQQNKPSRSKRGMRRSHDALTTSSVSVDKVSGETHLRHHITADGYYRGRKVIAK</sequence>
<evidence type="ECO:0000255" key="1">
    <source>
        <dbReference type="HAMAP-Rule" id="MF_00340"/>
    </source>
</evidence>
<evidence type="ECO:0000256" key="2">
    <source>
        <dbReference type="SAM" id="MobiDB-lite"/>
    </source>
</evidence>
<evidence type="ECO:0000305" key="3"/>